<name>MINC_CROS8</name>
<sequence>MSNTPIELKGSSFTLSVVHLHDAHPEVIRKALEEKIAQAPAFLKNAPVVVNVAGLDGSINWQQLHQTFIDSGLHLVGISGCQDDALKAEISRAGLALLTEGKASAPRAAKPAETPAPPAAALRTRLIDLPVRSGQRIYAPGADLVVTSHVSAGAELIADGNIHVYGTMRGRALAGAGGDKEAQIFSTNLAAELVSIAGVYWLSDQIPAEFYNKAARLRLADGALTVQPLN</sequence>
<evidence type="ECO:0000255" key="1">
    <source>
        <dbReference type="HAMAP-Rule" id="MF_00267"/>
    </source>
</evidence>
<comment type="function">
    <text evidence="1">Cell division inhibitor that blocks the formation of polar Z ring septums. Rapidly oscillates between the poles of the cell to destabilize FtsZ filaments that have formed before they mature into polar Z rings. Prevents FtsZ polymerization.</text>
</comment>
<comment type="subunit">
    <text evidence="1">Interacts with MinD and FtsZ.</text>
</comment>
<comment type="similarity">
    <text evidence="1">Belongs to the MinC family.</text>
</comment>
<organism>
    <name type="scientific">Cronobacter sakazakii (strain ATCC BAA-894)</name>
    <name type="common">Enterobacter sakazakii</name>
    <dbReference type="NCBI Taxonomy" id="290339"/>
    <lineage>
        <taxon>Bacteria</taxon>
        <taxon>Pseudomonadati</taxon>
        <taxon>Pseudomonadota</taxon>
        <taxon>Gammaproteobacteria</taxon>
        <taxon>Enterobacterales</taxon>
        <taxon>Enterobacteriaceae</taxon>
        <taxon>Cronobacter</taxon>
    </lineage>
</organism>
<proteinExistence type="inferred from homology"/>
<feature type="chain" id="PRO_1000047829" description="Probable septum site-determining protein MinC">
    <location>
        <begin position="1"/>
        <end position="230"/>
    </location>
</feature>
<accession>A7MKE5</accession>
<dbReference type="EMBL" id="CP000783">
    <property type="protein sequence ID" value="ABU76717.1"/>
    <property type="molecule type" value="Genomic_DNA"/>
</dbReference>
<dbReference type="RefSeq" id="WP_004384980.1">
    <property type="nucleotide sequence ID" value="NC_009778.1"/>
</dbReference>
<dbReference type="SMR" id="A7MKE5"/>
<dbReference type="GeneID" id="56730303"/>
<dbReference type="KEGG" id="esa:ESA_01459"/>
<dbReference type="HOGENOM" id="CLU_067812_0_1_6"/>
<dbReference type="Proteomes" id="UP000000260">
    <property type="component" value="Chromosome"/>
</dbReference>
<dbReference type="GO" id="GO:0000902">
    <property type="term" value="P:cell morphogenesis"/>
    <property type="evidence" value="ECO:0007669"/>
    <property type="project" value="InterPro"/>
</dbReference>
<dbReference type="GO" id="GO:0000917">
    <property type="term" value="P:division septum assembly"/>
    <property type="evidence" value="ECO:0007669"/>
    <property type="project" value="UniProtKB-KW"/>
</dbReference>
<dbReference type="GO" id="GO:0051302">
    <property type="term" value="P:regulation of cell division"/>
    <property type="evidence" value="ECO:0007669"/>
    <property type="project" value="InterPro"/>
</dbReference>
<dbReference type="GO" id="GO:1901891">
    <property type="term" value="P:regulation of cell septum assembly"/>
    <property type="evidence" value="ECO:0007669"/>
    <property type="project" value="InterPro"/>
</dbReference>
<dbReference type="FunFam" id="2.160.20.70:FF:000002">
    <property type="entry name" value="Probable septum site-determining protein MinC"/>
    <property type="match status" value="1"/>
</dbReference>
<dbReference type="Gene3D" id="2.160.20.70">
    <property type="match status" value="1"/>
</dbReference>
<dbReference type="Gene3D" id="3.30.70.260">
    <property type="match status" value="1"/>
</dbReference>
<dbReference type="HAMAP" id="MF_00267">
    <property type="entry name" value="MinC"/>
    <property type="match status" value="1"/>
</dbReference>
<dbReference type="InterPro" id="IPR016098">
    <property type="entry name" value="CAP/MinC_C"/>
</dbReference>
<dbReference type="InterPro" id="IPR013033">
    <property type="entry name" value="MinC"/>
</dbReference>
<dbReference type="InterPro" id="IPR036145">
    <property type="entry name" value="MinC_C_sf"/>
</dbReference>
<dbReference type="InterPro" id="IPR007874">
    <property type="entry name" value="MinC_N"/>
</dbReference>
<dbReference type="InterPro" id="IPR005526">
    <property type="entry name" value="Septum_form_inhib_MinC_C"/>
</dbReference>
<dbReference type="NCBIfam" id="TIGR01222">
    <property type="entry name" value="minC"/>
    <property type="match status" value="1"/>
</dbReference>
<dbReference type="PANTHER" id="PTHR34108">
    <property type="entry name" value="SEPTUM SITE-DETERMINING PROTEIN MINC"/>
    <property type="match status" value="1"/>
</dbReference>
<dbReference type="PANTHER" id="PTHR34108:SF1">
    <property type="entry name" value="SEPTUM SITE-DETERMINING PROTEIN MINC"/>
    <property type="match status" value="1"/>
</dbReference>
<dbReference type="Pfam" id="PF03775">
    <property type="entry name" value="MinC_C"/>
    <property type="match status" value="1"/>
</dbReference>
<dbReference type="Pfam" id="PF05209">
    <property type="entry name" value="MinC_N"/>
    <property type="match status" value="1"/>
</dbReference>
<dbReference type="SUPFAM" id="SSF63848">
    <property type="entry name" value="Cell-division inhibitor MinC, C-terminal domain"/>
    <property type="match status" value="1"/>
</dbReference>
<keyword id="KW-0131">Cell cycle</keyword>
<keyword id="KW-0132">Cell division</keyword>
<keyword id="KW-1185">Reference proteome</keyword>
<keyword id="KW-0717">Septation</keyword>
<protein>
    <recommendedName>
        <fullName evidence="1">Probable septum site-determining protein MinC</fullName>
    </recommendedName>
</protein>
<reference key="1">
    <citation type="journal article" date="2010" name="PLoS ONE">
        <title>Genome sequence of Cronobacter sakazakii BAA-894 and comparative genomic hybridization analysis with other Cronobacter species.</title>
        <authorList>
            <person name="Kucerova E."/>
            <person name="Clifton S.W."/>
            <person name="Xia X.Q."/>
            <person name="Long F."/>
            <person name="Porwollik S."/>
            <person name="Fulton L."/>
            <person name="Fronick C."/>
            <person name="Minx P."/>
            <person name="Kyung K."/>
            <person name="Warren W."/>
            <person name="Fulton R."/>
            <person name="Feng D."/>
            <person name="Wollam A."/>
            <person name="Shah N."/>
            <person name="Bhonagiri V."/>
            <person name="Nash W.E."/>
            <person name="Hallsworth-Pepin K."/>
            <person name="Wilson R.K."/>
            <person name="McClelland M."/>
            <person name="Forsythe S.J."/>
        </authorList>
    </citation>
    <scope>NUCLEOTIDE SEQUENCE [LARGE SCALE GENOMIC DNA]</scope>
    <source>
        <strain>ATCC BAA-894</strain>
    </source>
</reference>
<gene>
    <name evidence="1" type="primary">minC</name>
    <name type="ordered locus">ESA_01459</name>
</gene>